<keyword id="KW-0217">Developmental protein</keyword>
<keyword id="KW-0265">Erythrocyte maturation</keyword>
<keyword id="KW-0472">Membrane</keyword>
<keyword id="KW-0539">Nucleus</keyword>
<keyword id="KW-1185">Reference proteome</keyword>
<keyword id="KW-0732">Signal</keyword>
<keyword id="KW-0812">Transmembrane</keyword>
<keyword id="KW-1133">Transmembrane helix</keyword>
<proteinExistence type="evidence at transcript level"/>
<feature type="signal peptide" evidence="4">
    <location>
        <begin position="1"/>
        <end position="29"/>
    </location>
</feature>
<feature type="chain" id="PRO_0000332242" description="Nuclear envelope integral membrane protein 1">
    <location>
        <begin position="30"/>
        <end position="431"/>
    </location>
</feature>
<feature type="transmembrane region" description="Helical" evidence="4">
    <location>
        <begin position="151"/>
        <end position="171"/>
    </location>
</feature>
<feature type="transmembrane region" description="Helical" evidence="4">
    <location>
        <begin position="175"/>
        <end position="195"/>
    </location>
</feature>
<feature type="transmembrane region" description="Helical" evidence="4">
    <location>
        <begin position="206"/>
        <end position="226"/>
    </location>
</feature>
<feature type="transmembrane region" description="Helical" evidence="4">
    <location>
        <begin position="236"/>
        <end position="256"/>
    </location>
</feature>
<feature type="transmembrane region" description="Helical" evidence="4">
    <location>
        <begin position="266"/>
        <end position="286"/>
    </location>
</feature>
<feature type="region of interest" description="A; required for its colocalization with lamins at the nuclear envelope" evidence="1">
    <location>
        <begin position="176"/>
        <end position="287"/>
    </location>
</feature>
<feature type="region of interest" description="Interaction with banf1-a and banf1-b" evidence="1">
    <location>
        <begin position="326"/>
        <end position="431"/>
    </location>
</feature>
<feature type="region of interest" description="B; required for interaction with ran" evidence="1">
    <location>
        <begin position="326"/>
        <end position="395"/>
    </location>
</feature>
<feature type="region of interest" description="BAF-binding site (BBS); essential for interaction with banf1-a, banf1-b and ran" evidence="1">
    <location>
        <begin position="368"/>
        <end position="375"/>
    </location>
</feature>
<feature type="short sequence motif" description="Nuclear localization signal" evidence="1">
    <location>
        <begin position="317"/>
        <end position="325"/>
    </location>
</feature>
<accession>Q28EH9</accession>
<accession>Q5BJ84</accession>
<sequence>MAGEVEGEGCRVSWGVLVALLLLPLPSLCSLTAGKQLQVIKLFEGRVVRYNESKNFCYQRTYEPKWSDVWTKIQIRVNSTKMIRVTQVENEEKLKEMETFNMFDFFSSFLKEKLNDSFIYVDLYNNKTCIKVHVSDTDTYYSVALSRGFDPRLFFVFLCGLLLFFYGDTLSRSQIFYYSTGITVGMLASMLILVFMLSKLMPKKSPFVALLLGGWSVSIYVIQLVFKNLQAICTEYWQYLLGYLGIVGFVSFAFCYKYGPLENERSINILNWTLQLIGLLLMYISVQIRHIAVTMVVIAFCTKQIEYPVRWIYILYRKIKLKRGKPSPPRLLTEEEYRKQGDVETRKALEELRGYCSSPDFAAWKTVSRIQSPKRFADFVEGSSHLTPNEVSVHEHEYGFGGSFLEDELFGEDSDVEEEMEIEPVLYQDLR</sequence>
<dbReference type="EMBL" id="CR848245">
    <property type="protein sequence ID" value="CAJ82959.1"/>
    <property type="molecule type" value="mRNA"/>
</dbReference>
<dbReference type="EMBL" id="BC091583">
    <property type="protein sequence ID" value="AAH91583.2"/>
    <property type="molecule type" value="mRNA"/>
</dbReference>
<dbReference type="EMBL" id="BC121559">
    <property type="protein sequence ID" value="AAI21560.1"/>
    <property type="molecule type" value="mRNA"/>
</dbReference>
<dbReference type="RefSeq" id="NP_001034832.1">
    <property type="nucleotide sequence ID" value="NM_001039743.1"/>
</dbReference>
<dbReference type="FunCoup" id="Q28EH9">
    <property type="interactions" value="1682"/>
</dbReference>
<dbReference type="STRING" id="8364.ENSXETP00000037354"/>
<dbReference type="PaxDb" id="8364-ENSXETP00000009646"/>
<dbReference type="GeneID" id="594887"/>
<dbReference type="KEGG" id="xtr:594887"/>
<dbReference type="AGR" id="Xenbase:XB-GENE-974573"/>
<dbReference type="CTD" id="23306"/>
<dbReference type="Xenbase" id="XB-GENE-974573">
    <property type="gene designation" value="nemp1"/>
</dbReference>
<dbReference type="eggNOG" id="KOG3817">
    <property type="taxonomic scope" value="Eukaryota"/>
</dbReference>
<dbReference type="HOGENOM" id="CLU_025225_0_0_1"/>
<dbReference type="InParanoid" id="Q28EH9"/>
<dbReference type="OMA" id="MAGCMKM"/>
<dbReference type="OrthoDB" id="509138at2759"/>
<dbReference type="PhylomeDB" id="Q28EH9"/>
<dbReference type="TreeFam" id="TF314831"/>
<dbReference type="Proteomes" id="UP000008143">
    <property type="component" value="Chromosome 2"/>
</dbReference>
<dbReference type="GO" id="GO:0005635">
    <property type="term" value="C:nuclear envelope"/>
    <property type="evidence" value="ECO:0000250"/>
    <property type="project" value="UniProtKB"/>
</dbReference>
<dbReference type="GO" id="GO:0005637">
    <property type="term" value="C:nuclear inner membrane"/>
    <property type="evidence" value="ECO:0000250"/>
    <property type="project" value="UniProtKB"/>
</dbReference>
<dbReference type="GO" id="GO:0043131">
    <property type="term" value="P:erythrocyte enucleation"/>
    <property type="evidence" value="ECO:0000250"/>
    <property type="project" value="UniProtKB"/>
</dbReference>
<dbReference type="GO" id="GO:0043249">
    <property type="term" value="P:erythrocyte maturation"/>
    <property type="evidence" value="ECO:0000250"/>
    <property type="project" value="UniProtKB"/>
</dbReference>
<dbReference type="GO" id="GO:0001654">
    <property type="term" value="P:eye development"/>
    <property type="evidence" value="ECO:0000250"/>
    <property type="project" value="UniProtKB"/>
</dbReference>
<dbReference type="InterPro" id="IPR019358">
    <property type="entry name" value="NEMP_fam"/>
</dbReference>
<dbReference type="PANTHER" id="PTHR13598">
    <property type="entry name" value="AT07567P-RELATED"/>
    <property type="match status" value="1"/>
</dbReference>
<dbReference type="PANTHER" id="PTHR13598:SF1">
    <property type="entry name" value="AT07567P-RELATED"/>
    <property type="match status" value="1"/>
</dbReference>
<dbReference type="Pfam" id="PF10225">
    <property type="entry name" value="NEMP"/>
    <property type="match status" value="1"/>
</dbReference>
<organism>
    <name type="scientific">Xenopus tropicalis</name>
    <name type="common">Western clawed frog</name>
    <name type="synonym">Silurana tropicalis</name>
    <dbReference type="NCBI Taxonomy" id="8364"/>
    <lineage>
        <taxon>Eukaryota</taxon>
        <taxon>Metazoa</taxon>
        <taxon>Chordata</taxon>
        <taxon>Craniata</taxon>
        <taxon>Vertebrata</taxon>
        <taxon>Euteleostomi</taxon>
        <taxon>Amphibia</taxon>
        <taxon>Batrachia</taxon>
        <taxon>Anura</taxon>
        <taxon>Pipoidea</taxon>
        <taxon>Pipidae</taxon>
        <taxon>Xenopodinae</taxon>
        <taxon>Xenopus</taxon>
        <taxon>Silurana</taxon>
    </lineage>
</organism>
<reference key="1">
    <citation type="submission" date="2006-10" db="EMBL/GenBank/DDBJ databases">
        <authorList>
            <consortium name="Sanger Xenopus tropicalis EST/cDNA project"/>
        </authorList>
    </citation>
    <scope>NUCLEOTIDE SEQUENCE [LARGE SCALE MRNA]</scope>
    <source>
        <tissue>Tadpole</tissue>
    </source>
</reference>
<reference key="2">
    <citation type="submission" date="2006-08" db="EMBL/GenBank/DDBJ databases">
        <authorList>
            <consortium name="NIH - Xenopus Gene Collection (XGC) project"/>
        </authorList>
    </citation>
    <scope>NUCLEOTIDE SEQUENCE [LARGE SCALE MRNA]</scope>
    <source>
        <strain>N6</strain>
        <tissue>Embryo</tissue>
        <tissue>Ovary</tissue>
    </source>
</reference>
<gene>
    <name type="primary">nemp1</name>
    <name type="synonym">tmem194a</name>
    <name type="ORF">TTpA010p19.1</name>
</gene>
<evidence type="ECO:0000250" key="1">
    <source>
        <dbReference type="UniProtKB" id="B9X187"/>
    </source>
</evidence>
<evidence type="ECO:0000250" key="2">
    <source>
        <dbReference type="UniProtKB" id="O14524"/>
    </source>
</evidence>
<evidence type="ECO:0000250" key="3">
    <source>
        <dbReference type="UniProtKB" id="Q6ZQE4"/>
    </source>
</evidence>
<evidence type="ECO:0000255" key="4"/>
<evidence type="ECO:0000305" key="5"/>
<name>NEMP1_XENTR</name>
<protein>
    <recommendedName>
        <fullName>Nuclear envelope integral membrane protein 1</fullName>
    </recommendedName>
</protein>
<comment type="function">
    <text evidence="1 2 3">In concert with ran, required for proper eye development. May be involved in the expression of early eye marker genes. Contributes to nuclear envelope stiffness in germ cells (By similarity). Required for fertility (By similarity). Essential for normal erythropoiesis (By similarity). Required for efficient nuclear envelope opening and enucleation during the late stages of erythroblast maturation (By similarity).</text>
</comment>
<comment type="subunit">
    <text evidence="1">Homooligomer. Interacts with banf1-a and banf1-b. Interacts with ran-gtp.</text>
</comment>
<comment type="subcellular location">
    <subcellularLocation>
        <location evidence="1">Nucleus inner membrane</location>
        <topology evidence="4">Multi-pass membrane protein</topology>
        <orientation evidence="1">Nucleoplasmic side</orientation>
    </subcellularLocation>
    <subcellularLocation>
        <location evidence="1">Nucleus envelope</location>
    </subcellularLocation>
    <text evidence="1">Localization in the nuclear membrane is essential for its function. Colocalizes with and lamins and banf1-a/b at the nuclear envelope.</text>
</comment>
<comment type="domain">
    <text evidence="1">The transmembrane domains are required and sufficient for its oligomerization.</text>
</comment>
<comment type="PTM">
    <text evidence="1">Phosphorylated.</text>
</comment>
<comment type="similarity">
    <text evidence="5">Belongs to the NEMP family.</text>
</comment>